<sequence>MKSLKVALIGSGAVGTSFLYAAMSRGLASEYMVIDINEKSQVGNVFDLQDAVPSSPQYSKVIAGDYKQLKDYDFIFIGAGRPQKQGGETRLQLLEGNVEIMKNIAKAVKESGFKGITLIASNPVDIMAYTYLKVTGFEPNKVIGSGTLLDSARLKFAIAEKYGMSSRDVQAYVLGEHGDSSVSIISSAKIAGLPLKHFSKASDIEKEFAEIDHFIRRRAYEIIERKGATFYGIGEATAEVAELILRDTKEVRVVASLINGQYGAKDVMFGTPCVLGRNGVEKILEIELSATEKAGLDKSIQVLKDNIKLAKL</sequence>
<gene>
    <name evidence="1" type="primary">ldh</name>
    <name type="ordered locus">MPN_674</name>
    <name type="ORF">MP168</name>
</gene>
<organism>
    <name type="scientific">Mycoplasma pneumoniae (strain ATCC 29342 / M129 / Subtype 1)</name>
    <name type="common">Mycoplasmoides pneumoniae</name>
    <dbReference type="NCBI Taxonomy" id="272634"/>
    <lineage>
        <taxon>Bacteria</taxon>
        <taxon>Bacillati</taxon>
        <taxon>Mycoplasmatota</taxon>
        <taxon>Mycoplasmoidales</taxon>
        <taxon>Mycoplasmoidaceae</taxon>
        <taxon>Mycoplasmoides</taxon>
    </lineage>
</organism>
<protein>
    <recommendedName>
        <fullName evidence="1">L-lactate dehydrogenase</fullName>
        <shortName evidence="1">L-LDH</shortName>
        <ecNumber evidence="1">1.1.1.27</ecNumber>
    </recommendedName>
</protein>
<name>LDH_MYCPN</name>
<proteinExistence type="evidence at protein level"/>
<feature type="chain" id="PRO_0000168374" description="L-lactate dehydrogenase">
    <location>
        <begin position="1"/>
        <end position="312"/>
    </location>
</feature>
<feature type="active site" description="Proton acceptor" evidence="1">
    <location>
        <position position="177"/>
    </location>
</feature>
<feature type="binding site" evidence="1">
    <location>
        <position position="14"/>
    </location>
    <ligand>
        <name>NAD(+)</name>
        <dbReference type="ChEBI" id="CHEBI:57540"/>
    </ligand>
</feature>
<feature type="binding site" evidence="1">
    <location>
        <position position="35"/>
    </location>
    <ligand>
        <name>NAD(+)</name>
        <dbReference type="ChEBI" id="CHEBI:57540"/>
    </ligand>
</feature>
<feature type="binding site" evidence="1">
    <location>
        <position position="66"/>
    </location>
    <ligand>
        <name>NAD(+)</name>
        <dbReference type="ChEBI" id="CHEBI:57540"/>
    </ligand>
</feature>
<feature type="binding site" evidence="1">
    <location>
        <position position="83"/>
    </location>
    <ligand>
        <name>substrate</name>
    </ligand>
</feature>
<feature type="binding site" evidence="1">
    <location>
        <position position="90"/>
    </location>
    <ligand>
        <name>substrate</name>
    </ligand>
</feature>
<feature type="binding site" evidence="1">
    <location>
        <begin position="120"/>
        <end position="122"/>
    </location>
    <ligand>
        <name>NAD(+)</name>
        <dbReference type="ChEBI" id="CHEBI:57540"/>
    </ligand>
</feature>
<feature type="binding site" evidence="1">
    <location>
        <begin position="122"/>
        <end position="125"/>
    </location>
    <ligand>
        <name>substrate</name>
    </ligand>
</feature>
<feature type="binding site" evidence="1">
    <location>
        <position position="145"/>
    </location>
    <ligand>
        <name>NAD(+)</name>
        <dbReference type="ChEBI" id="CHEBI:57540"/>
    </ligand>
</feature>
<feature type="binding site" evidence="1">
    <location>
        <begin position="150"/>
        <end position="153"/>
    </location>
    <ligand>
        <name>substrate</name>
    </ligand>
</feature>
<feature type="binding site" evidence="1">
    <location>
        <position position="229"/>
    </location>
    <ligand>
        <name>substrate</name>
    </ligand>
</feature>
<feature type="modified residue" description="Phosphotyrosine" evidence="1">
    <location>
        <position position="220"/>
    </location>
</feature>
<keyword id="KW-0963">Cytoplasm</keyword>
<keyword id="KW-0520">NAD</keyword>
<keyword id="KW-0560">Oxidoreductase</keyword>
<keyword id="KW-0597">Phosphoprotein</keyword>
<keyword id="KW-1185">Reference proteome</keyword>
<accession>P78007</accession>
<comment type="function">
    <text evidence="1">Catalyzes the conversion of lactate to pyruvate.</text>
</comment>
<comment type="catalytic activity">
    <reaction evidence="1">
        <text>(S)-lactate + NAD(+) = pyruvate + NADH + H(+)</text>
        <dbReference type="Rhea" id="RHEA:23444"/>
        <dbReference type="ChEBI" id="CHEBI:15361"/>
        <dbReference type="ChEBI" id="CHEBI:15378"/>
        <dbReference type="ChEBI" id="CHEBI:16651"/>
        <dbReference type="ChEBI" id="CHEBI:57540"/>
        <dbReference type="ChEBI" id="CHEBI:57945"/>
        <dbReference type="EC" id="1.1.1.27"/>
    </reaction>
</comment>
<comment type="pathway">
    <text evidence="1">Fermentation; pyruvate fermentation to lactate; (S)-lactate from pyruvate: step 1/1.</text>
</comment>
<comment type="subunit">
    <text evidence="1">Homotetramer.</text>
</comment>
<comment type="interaction">
    <interactant intactId="EBI-2260877">
        <id>P78007</id>
    </interactant>
    <interactant intactId="EBI-1036653">
        <id>P04004</id>
        <label>VTN</label>
    </interactant>
    <organismsDiffer>true</organismsDiffer>
    <experiments>3</experiments>
</comment>
<comment type="subcellular location">
    <subcellularLocation>
        <location evidence="1">Cytoplasm</location>
    </subcellularLocation>
</comment>
<comment type="similarity">
    <text evidence="1 2">Belongs to the LDH/MDH superfamily. LDH family.</text>
</comment>
<reference key="1">
    <citation type="journal article" date="1996" name="Nucleic Acids Res.">
        <title>Complete sequence analysis of the genome of the bacterium Mycoplasma pneumoniae.</title>
        <authorList>
            <person name="Himmelreich R."/>
            <person name="Hilbert H."/>
            <person name="Plagens H."/>
            <person name="Pirkl E."/>
            <person name="Li B.-C."/>
            <person name="Herrmann R."/>
        </authorList>
    </citation>
    <scope>NUCLEOTIDE SEQUENCE [LARGE SCALE GENOMIC DNA]</scope>
    <source>
        <strain>ATCC 29342 / M129 / Subtype 1</strain>
    </source>
</reference>
<dbReference type="EC" id="1.1.1.27" evidence="1"/>
<dbReference type="EMBL" id="U00089">
    <property type="protein sequence ID" value="AAB95816.1"/>
    <property type="molecule type" value="Genomic_DNA"/>
</dbReference>
<dbReference type="PIR" id="S73494">
    <property type="entry name" value="S73494"/>
</dbReference>
<dbReference type="RefSeq" id="NP_110363.1">
    <property type="nucleotide sequence ID" value="NC_000912.1"/>
</dbReference>
<dbReference type="RefSeq" id="WP_010875031.1">
    <property type="nucleotide sequence ID" value="NZ_OU342337.1"/>
</dbReference>
<dbReference type="SMR" id="P78007"/>
<dbReference type="IntAct" id="P78007">
    <property type="interactions" value="8"/>
</dbReference>
<dbReference type="STRING" id="272634.MPN_674"/>
<dbReference type="EnsemblBacteria" id="AAB95816">
    <property type="protein sequence ID" value="AAB95816"/>
    <property type="gene ID" value="MPN_674"/>
</dbReference>
<dbReference type="KEGG" id="mpn:MPN_674"/>
<dbReference type="PATRIC" id="fig|272634.6.peg.741"/>
<dbReference type="HOGENOM" id="CLU_045401_1_2_14"/>
<dbReference type="OrthoDB" id="9802969at2"/>
<dbReference type="BioCyc" id="MetaCyc:MONOMER-601"/>
<dbReference type="BioCyc" id="MPNE272634:G1GJ3-1079-MONOMER"/>
<dbReference type="UniPathway" id="UPA00554">
    <property type="reaction ID" value="UER00611"/>
</dbReference>
<dbReference type="Proteomes" id="UP000000808">
    <property type="component" value="Chromosome"/>
</dbReference>
<dbReference type="GO" id="GO:0005737">
    <property type="term" value="C:cytoplasm"/>
    <property type="evidence" value="ECO:0007669"/>
    <property type="project" value="UniProtKB-SubCell"/>
</dbReference>
<dbReference type="GO" id="GO:0016020">
    <property type="term" value="C:membrane"/>
    <property type="evidence" value="ECO:0000314"/>
    <property type="project" value="AgBase"/>
</dbReference>
<dbReference type="GO" id="GO:0004459">
    <property type="term" value="F:L-lactate dehydrogenase activity"/>
    <property type="evidence" value="ECO:0007669"/>
    <property type="project" value="UniProtKB-UniRule"/>
</dbReference>
<dbReference type="GO" id="GO:0006096">
    <property type="term" value="P:glycolytic process"/>
    <property type="evidence" value="ECO:0007669"/>
    <property type="project" value="UniProtKB-UniRule"/>
</dbReference>
<dbReference type="GO" id="GO:0006089">
    <property type="term" value="P:lactate metabolic process"/>
    <property type="evidence" value="ECO:0007669"/>
    <property type="project" value="TreeGrafter"/>
</dbReference>
<dbReference type="CDD" id="cd05291">
    <property type="entry name" value="HicDH_like"/>
    <property type="match status" value="1"/>
</dbReference>
<dbReference type="Gene3D" id="3.90.110.10">
    <property type="entry name" value="Lactate dehydrogenase/glycoside hydrolase, family 4, C-terminal"/>
    <property type="match status" value="1"/>
</dbReference>
<dbReference type="Gene3D" id="3.40.50.720">
    <property type="entry name" value="NAD(P)-binding Rossmann-like Domain"/>
    <property type="match status" value="1"/>
</dbReference>
<dbReference type="HAMAP" id="MF_00488">
    <property type="entry name" value="Lactate_dehydrog"/>
    <property type="match status" value="1"/>
</dbReference>
<dbReference type="InterPro" id="IPR001557">
    <property type="entry name" value="L-lactate/malate_DH"/>
</dbReference>
<dbReference type="InterPro" id="IPR011304">
    <property type="entry name" value="L-lactate_DH"/>
</dbReference>
<dbReference type="InterPro" id="IPR018177">
    <property type="entry name" value="L-lactate_DH_AS"/>
</dbReference>
<dbReference type="InterPro" id="IPR022383">
    <property type="entry name" value="Lactate/malate_DH_C"/>
</dbReference>
<dbReference type="InterPro" id="IPR001236">
    <property type="entry name" value="Lactate/malate_DH_N"/>
</dbReference>
<dbReference type="InterPro" id="IPR015955">
    <property type="entry name" value="Lactate_DH/Glyco_Ohase_4_C"/>
</dbReference>
<dbReference type="InterPro" id="IPR036291">
    <property type="entry name" value="NAD(P)-bd_dom_sf"/>
</dbReference>
<dbReference type="NCBIfam" id="TIGR01771">
    <property type="entry name" value="L-LDH-NAD"/>
    <property type="match status" value="1"/>
</dbReference>
<dbReference type="PANTHER" id="PTHR43128">
    <property type="entry name" value="L-2-HYDROXYCARBOXYLATE DEHYDROGENASE (NAD(P)(+))"/>
    <property type="match status" value="1"/>
</dbReference>
<dbReference type="PANTHER" id="PTHR43128:SF16">
    <property type="entry name" value="L-LACTATE DEHYDROGENASE"/>
    <property type="match status" value="1"/>
</dbReference>
<dbReference type="Pfam" id="PF02866">
    <property type="entry name" value="Ldh_1_C"/>
    <property type="match status" value="1"/>
</dbReference>
<dbReference type="Pfam" id="PF00056">
    <property type="entry name" value="Ldh_1_N"/>
    <property type="match status" value="1"/>
</dbReference>
<dbReference type="PIRSF" id="PIRSF000102">
    <property type="entry name" value="Lac_mal_DH"/>
    <property type="match status" value="1"/>
</dbReference>
<dbReference type="PRINTS" id="PR00086">
    <property type="entry name" value="LLDHDRGNASE"/>
</dbReference>
<dbReference type="SUPFAM" id="SSF56327">
    <property type="entry name" value="LDH C-terminal domain-like"/>
    <property type="match status" value="1"/>
</dbReference>
<dbReference type="SUPFAM" id="SSF51735">
    <property type="entry name" value="NAD(P)-binding Rossmann-fold domains"/>
    <property type="match status" value="1"/>
</dbReference>
<dbReference type="PROSITE" id="PS00064">
    <property type="entry name" value="L_LDH"/>
    <property type="match status" value="1"/>
</dbReference>
<evidence type="ECO:0000255" key="1">
    <source>
        <dbReference type="HAMAP-Rule" id="MF_00488"/>
    </source>
</evidence>
<evidence type="ECO:0000305" key="2"/>